<organism>
    <name type="scientific">Rickettsia typhi (strain ATCC VR-144 / Wilmington)</name>
    <dbReference type="NCBI Taxonomy" id="257363"/>
    <lineage>
        <taxon>Bacteria</taxon>
        <taxon>Pseudomonadati</taxon>
        <taxon>Pseudomonadota</taxon>
        <taxon>Alphaproteobacteria</taxon>
        <taxon>Rickettsiales</taxon>
        <taxon>Rickettsiaceae</taxon>
        <taxon>Rickettsieae</taxon>
        <taxon>Rickettsia</taxon>
        <taxon>typhus group</taxon>
    </lineage>
</organism>
<proteinExistence type="inferred from homology"/>
<accession>Q68Y04</accession>
<reference key="1">
    <citation type="journal article" date="2004" name="J. Bacteriol.">
        <title>Complete genome sequence of Rickettsia typhi and comparison with sequences of other Rickettsiae.</title>
        <authorList>
            <person name="McLeod M.P."/>
            <person name="Qin X."/>
            <person name="Karpathy S.E."/>
            <person name="Gioia J."/>
            <person name="Highlander S.K."/>
            <person name="Fox G.E."/>
            <person name="McNeill T.Z."/>
            <person name="Jiang H."/>
            <person name="Muzny D."/>
            <person name="Jacob L.S."/>
            <person name="Hawes A.C."/>
            <person name="Sodergren E."/>
            <person name="Gill R."/>
            <person name="Hume J."/>
            <person name="Morgan M."/>
            <person name="Fan G."/>
            <person name="Amin A.G."/>
            <person name="Gibbs R.A."/>
            <person name="Hong C."/>
            <person name="Yu X.-J."/>
            <person name="Walker D.H."/>
            <person name="Weinstock G.M."/>
        </authorList>
    </citation>
    <scope>NUCLEOTIDE SEQUENCE [LARGE SCALE GENOMIC DNA]</scope>
    <source>
        <strain>ATCC VR-144 / Wilmington</strain>
    </source>
</reference>
<name>FER_RICTY</name>
<dbReference type="EMBL" id="AE017197">
    <property type="protein sequence ID" value="AAU04272.1"/>
    <property type="molecule type" value="Genomic_DNA"/>
</dbReference>
<dbReference type="RefSeq" id="WP_011191246.1">
    <property type="nucleotide sequence ID" value="NC_006142.1"/>
</dbReference>
<dbReference type="SMR" id="Q68Y04"/>
<dbReference type="KEGG" id="rty:RT0817"/>
<dbReference type="eggNOG" id="COG1146">
    <property type="taxonomic scope" value="Bacteria"/>
</dbReference>
<dbReference type="HOGENOM" id="CLU_139698_0_0_5"/>
<dbReference type="OrthoDB" id="9803397at2"/>
<dbReference type="Proteomes" id="UP000000604">
    <property type="component" value="Chromosome"/>
</dbReference>
<dbReference type="GO" id="GO:0051538">
    <property type="term" value="F:3 iron, 4 sulfur cluster binding"/>
    <property type="evidence" value="ECO:0007669"/>
    <property type="project" value="UniProtKB-KW"/>
</dbReference>
<dbReference type="GO" id="GO:0051539">
    <property type="term" value="F:4 iron, 4 sulfur cluster binding"/>
    <property type="evidence" value="ECO:0007669"/>
    <property type="project" value="UniProtKB-KW"/>
</dbReference>
<dbReference type="GO" id="GO:0009055">
    <property type="term" value="F:electron transfer activity"/>
    <property type="evidence" value="ECO:0007669"/>
    <property type="project" value="InterPro"/>
</dbReference>
<dbReference type="GO" id="GO:0046872">
    <property type="term" value="F:metal ion binding"/>
    <property type="evidence" value="ECO:0007669"/>
    <property type="project" value="UniProtKB-KW"/>
</dbReference>
<dbReference type="Gene3D" id="3.30.70.20">
    <property type="match status" value="1"/>
</dbReference>
<dbReference type="InterPro" id="IPR017896">
    <property type="entry name" value="4Fe4S_Fe-S-bd"/>
</dbReference>
<dbReference type="InterPro" id="IPR017900">
    <property type="entry name" value="4Fe4S_Fe_S_CS"/>
</dbReference>
<dbReference type="InterPro" id="IPR000813">
    <property type="entry name" value="7Fe_ferredoxin"/>
</dbReference>
<dbReference type="InterPro" id="IPR022569">
    <property type="entry name" value="Fd_C"/>
</dbReference>
<dbReference type="InterPro" id="IPR054829">
    <property type="entry name" value="FdxA"/>
</dbReference>
<dbReference type="InterPro" id="IPR050294">
    <property type="entry name" value="RnfB_subfamily"/>
</dbReference>
<dbReference type="NCBIfam" id="NF045490">
    <property type="entry name" value="FdxA_Protbact"/>
    <property type="match status" value="1"/>
</dbReference>
<dbReference type="PANTHER" id="PTHR42859:SF2">
    <property type="entry name" value="FERREDOXIN"/>
    <property type="match status" value="1"/>
</dbReference>
<dbReference type="PANTHER" id="PTHR42859">
    <property type="entry name" value="OXIDOREDUCTASE"/>
    <property type="match status" value="1"/>
</dbReference>
<dbReference type="Pfam" id="PF11953">
    <property type="entry name" value="DUF3470"/>
    <property type="match status" value="1"/>
</dbReference>
<dbReference type="Pfam" id="PF00037">
    <property type="entry name" value="Fer4"/>
    <property type="match status" value="1"/>
</dbReference>
<dbReference type="PRINTS" id="PR00354">
    <property type="entry name" value="7FE8SFRDOXIN"/>
</dbReference>
<dbReference type="SUPFAM" id="SSF54862">
    <property type="entry name" value="4Fe-4S ferredoxins"/>
    <property type="match status" value="1"/>
</dbReference>
<dbReference type="PROSITE" id="PS00198">
    <property type="entry name" value="4FE4S_FER_1"/>
    <property type="match status" value="1"/>
</dbReference>
<dbReference type="PROSITE" id="PS51379">
    <property type="entry name" value="4FE4S_FER_2"/>
    <property type="match status" value="2"/>
</dbReference>
<evidence type="ECO:0000250" key="1"/>
<evidence type="ECO:0000255" key="2">
    <source>
        <dbReference type="PROSITE-ProRule" id="PRU00711"/>
    </source>
</evidence>
<keyword id="KW-0003">3Fe-4S</keyword>
<keyword id="KW-0004">4Fe-4S</keyword>
<keyword id="KW-0249">Electron transport</keyword>
<keyword id="KW-0408">Iron</keyword>
<keyword id="KW-0411">Iron-sulfur</keyword>
<keyword id="KW-0479">Metal-binding</keyword>
<keyword id="KW-0677">Repeat</keyword>
<keyword id="KW-0813">Transport</keyword>
<protein>
    <recommendedName>
        <fullName>Ferredoxin</fullName>
    </recommendedName>
</protein>
<comment type="function">
    <text evidence="1">Ferredoxins are iron-sulfur proteins that transfer electrons in a wide variety of metabolic reactions.</text>
</comment>
<comment type="cofactor">
    <cofactor evidence="1">
        <name>[4Fe-4S] cluster</name>
        <dbReference type="ChEBI" id="CHEBI:49883"/>
    </cofactor>
    <text evidence="1">Binds 1 [4Fe-4S] cluster.</text>
</comment>
<comment type="cofactor">
    <cofactor evidence="1">
        <name>[3Fe-4S] cluster</name>
        <dbReference type="ChEBI" id="CHEBI:21137"/>
    </cofactor>
    <text evidence="1">Binds 1 [3Fe-4S] cluster.</text>
</comment>
<sequence length="110" mass="12782">MTYIVTDECVKCKYTDCVEVCPVDCFYEGEFMLVINPDECIDCGVCVPDCPIDAIKPESPELIEWVERAKDFIENQGWKNITKKKCALPDADKFKDEQDKFNKYIIKNMH</sequence>
<feature type="initiator methionine" description="Removed" evidence="1">
    <location>
        <position position="1"/>
    </location>
</feature>
<feature type="chain" id="PRO_0000280965" description="Ferredoxin">
    <location>
        <begin position="2"/>
        <end position="110"/>
    </location>
</feature>
<feature type="domain" description="4Fe-4S ferredoxin-type 1" evidence="2">
    <location>
        <begin position="2"/>
        <end position="30"/>
    </location>
</feature>
<feature type="domain" description="4Fe-4S ferredoxin-type 2" evidence="2">
    <location>
        <begin position="31"/>
        <end position="60"/>
    </location>
</feature>
<feature type="binding site" evidence="1">
    <location>
        <position position="9"/>
    </location>
    <ligand>
        <name>[3Fe-4S] cluster</name>
        <dbReference type="ChEBI" id="CHEBI:21137"/>
    </ligand>
</feature>
<feature type="binding site" evidence="1">
    <location>
        <position position="17"/>
    </location>
    <ligand>
        <name>[3Fe-4S] cluster</name>
        <dbReference type="ChEBI" id="CHEBI:21137"/>
    </ligand>
</feature>
<feature type="binding site" evidence="1">
    <location>
        <position position="21"/>
    </location>
    <ligand>
        <name>[4Fe-4S] cluster</name>
        <dbReference type="ChEBI" id="CHEBI:49883"/>
    </ligand>
</feature>
<feature type="binding site" evidence="1">
    <location>
        <position position="40"/>
    </location>
    <ligand>
        <name>[4Fe-4S] cluster</name>
        <dbReference type="ChEBI" id="CHEBI:49883"/>
    </ligand>
</feature>
<feature type="binding site" evidence="1">
    <location>
        <position position="43"/>
    </location>
    <ligand>
        <name>[4Fe-4S] cluster</name>
        <dbReference type="ChEBI" id="CHEBI:49883"/>
    </ligand>
</feature>
<feature type="binding site" evidence="1">
    <location>
        <position position="46"/>
    </location>
    <ligand>
        <name>[4Fe-4S] cluster</name>
        <dbReference type="ChEBI" id="CHEBI:49883"/>
    </ligand>
</feature>
<feature type="binding site" evidence="1">
    <location>
        <position position="50"/>
    </location>
    <ligand>
        <name>[3Fe-4S] cluster</name>
        <dbReference type="ChEBI" id="CHEBI:21137"/>
    </ligand>
</feature>
<gene>
    <name type="primary">fdxA</name>
    <name type="ordered locus">RT0817</name>
</gene>